<sequence>MSVVNNRVALTNLVSMEALTTEEVLGLINRGSEYKAGKVVISDHQKDLVANLFFENSTRTHKSFEVAEKKLGLTVLDFNADASAVNKGESLYDTVLTMSALGTDICVIRHPEDDYYKELVESPTITASIVNGGDGSGQHPSQCLLDLLTIYEEFGRFEGLKIAIAGDLTHSRVAKSNMQILKRLGAELYFYGPEEWYSEAFNAYGTYIAIDQIIKELDVLMLLRVQHERHDGHQSFSKEGYHQAFGLTQERYQQLKDSAIIMHPAPVNRDVEIADSLVEAPKARIVSQMANGVFVRMAIIEAILNGRNKNS</sequence>
<name>PYRB_STRPZ</name>
<accession>B5XKW0</accession>
<proteinExistence type="inferred from homology"/>
<keyword id="KW-0665">Pyrimidine biosynthesis</keyword>
<keyword id="KW-0808">Transferase</keyword>
<dbReference type="EC" id="2.1.3.2" evidence="1"/>
<dbReference type="EMBL" id="CP000829">
    <property type="protein sequence ID" value="ACI60972.1"/>
    <property type="molecule type" value="Genomic_DNA"/>
</dbReference>
<dbReference type="SMR" id="B5XKW0"/>
<dbReference type="KEGG" id="soz:Spy49_0652"/>
<dbReference type="HOGENOM" id="CLU_043846_2_1_9"/>
<dbReference type="UniPathway" id="UPA00070">
    <property type="reaction ID" value="UER00116"/>
</dbReference>
<dbReference type="Proteomes" id="UP000001039">
    <property type="component" value="Chromosome"/>
</dbReference>
<dbReference type="GO" id="GO:0005829">
    <property type="term" value="C:cytosol"/>
    <property type="evidence" value="ECO:0007669"/>
    <property type="project" value="TreeGrafter"/>
</dbReference>
<dbReference type="GO" id="GO:0016597">
    <property type="term" value="F:amino acid binding"/>
    <property type="evidence" value="ECO:0007669"/>
    <property type="project" value="InterPro"/>
</dbReference>
<dbReference type="GO" id="GO:0004070">
    <property type="term" value="F:aspartate carbamoyltransferase activity"/>
    <property type="evidence" value="ECO:0007669"/>
    <property type="project" value="UniProtKB-UniRule"/>
</dbReference>
<dbReference type="GO" id="GO:0006207">
    <property type="term" value="P:'de novo' pyrimidine nucleobase biosynthetic process"/>
    <property type="evidence" value="ECO:0007669"/>
    <property type="project" value="InterPro"/>
</dbReference>
<dbReference type="GO" id="GO:0044205">
    <property type="term" value="P:'de novo' UMP biosynthetic process"/>
    <property type="evidence" value="ECO:0007669"/>
    <property type="project" value="UniProtKB-UniRule"/>
</dbReference>
<dbReference type="GO" id="GO:0006520">
    <property type="term" value="P:amino acid metabolic process"/>
    <property type="evidence" value="ECO:0007669"/>
    <property type="project" value="InterPro"/>
</dbReference>
<dbReference type="FunFam" id="3.40.50.1370:FF:000011">
    <property type="entry name" value="Aspartate carbamoyltransferase"/>
    <property type="match status" value="1"/>
</dbReference>
<dbReference type="Gene3D" id="3.40.50.1370">
    <property type="entry name" value="Aspartate/ornithine carbamoyltransferase"/>
    <property type="match status" value="2"/>
</dbReference>
<dbReference type="HAMAP" id="MF_00001">
    <property type="entry name" value="Asp_carb_tr"/>
    <property type="match status" value="1"/>
</dbReference>
<dbReference type="InterPro" id="IPR006132">
    <property type="entry name" value="Asp/Orn_carbamoyltranf_P-bd"/>
</dbReference>
<dbReference type="InterPro" id="IPR006130">
    <property type="entry name" value="Asp/Orn_carbamoylTrfase"/>
</dbReference>
<dbReference type="InterPro" id="IPR036901">
    <property type="entry name" value="Asp/Orn_carbamoylTrfase_sf"/>
</dbReference>
<dbReference type="InterPro" id="IPR002082">
    <property type="entry name" value="Asp_carbamoyltransf"/>
</dbReference>
<dbReference type="InterPro" id="IPR006131">
    <property type="entry name" value="Asp_carbamoyltransf_Asp/Orn-bd"/>
</dbReference>
<dbReference type="NCBIfam" id="TIGR00670">
    <property type="entry name" value="asp_carb_tr"/>
    <property type="match status" value="1"/>
</dbReference>
<dbReference type="NCBIfam" id="NF002032">
    <property type="entry name" value="PRK00856.1"/>
    <property type="match status" value="1"/>
</dbReference>
<dbReference type="PANTHER" id="PTHR45753:SF6">
    <property type="entry name" value="ASPARTATE CARBAMOYLTRANSFERASE"/>
    <property type="match status" value="1"/>
</dbReference>
<dbReference type="PANTHER" id="PTHR45753">
    <property type="entry name" value="ORNITHINE CARBAMOYLTRANSFERASE, MITOCHONDRIAL"/>
    <property type="match status" value="1"/>
</dbReference>
<dbReference type="Pfam" id="PF00185">
    <property type="entry name" value="OTCace"/>
    <property type="match status" value="1"/>
</dbReference>
<dbReference type="Pfam" id="PF02729">
    <property type="entry name" value="OTCace_N"/>
    <property type="match status" value="1"/>
</dbReference>
<dbReference type="PRINTS" id="PR00100">
    <property type="entry name" value="AOTCASE"/>
</dbReference>
<dbReference type="PRINTS" id="PR00101">
    <property type="entry name" value="ATCASE"/>
</dbReference>
<dbReference type="SUPFAM" id="SSF53671">
    <property type="entry name" value="Aspartate/ornithine carbamoyltransferase"/>
    <property type="match status" value="1"/>
</dbReference>
<dbReference type="PROSITE" id="PS00097">
    <property type="entry name" value="CARBAMOYLTRANSFERASE"/>
    <property type="match status" value="1"/>
</dbReference>
<protein>
    <recommendedName>
        <fullName evidence="1">Aspartate carbamoyltransferase catalytic subunit</fullName>
        <ecNumber evidence="1">2.1.3.2</ecNumber>
    </recommendedName>
    <alternativeName>
        <fullName evidence="1">Aspartate transcarbamylase</fullName>
        <shortName evidence="1">ATCase</shortName>
    </alternativeName>
</protein>
<organism>
    <name type="scientific">Streptococcus pyogenes serotype M49 (strain NZ131)</name>
    <dbReference type="NCBI Taxonomy" id="471876"/>
    <lineage>
        <taxon>Bacteria</taxon>
        <taxon>Bacillati</taxon>
        <taxon>Bacillota</taxon>
        <taxon>Bacilli</taxon>
        <taxon>Lactobacillales</taxon>
        <taxon>Streptococcaceae</taxon>
        <taxon>Streptococcus</taxon>
    </lineage>
</organism>
<evidence type="ECO:0000255" key="1">
    <source>
        <dbReference type="HAMAP-Rule" id="MF_00001"/>
    </source>
</evidence>
<comment type="function">
    <text evidence="1">Catalyzes the condensation of carbamoyl phosphate and aspartate to form carbamoyl aspartate and inorganic phosphate, the committed step in the de novo pyrimidine nucleotide biosynthesis pathway.</text>
</comment>
<comment type="catalytic activity">
    <reaction evidence="1">
        <text>carbamoyl phosphate + L-aspartate = N-carbamoyl-L-aspartate + phosphate + H(+)</text>
        <dbReference type="Rhea" id="RHEA:20013"/>
        <dbReference type="ChEBI" id="CHEBI:15378"/>
        <dbReference type="ChEBI" id="CHEBI:29991"/>
        <dbReference type="ChEBI" id="CHEBI:32814"/>
        <dbReference type="ChEBI" id="CHEBI:43474"/>
        <dbReference type="ChEBI" id="CHEBI:58228"/>
        <dbReference type="EC" id="2.1.3.2"/>
    </reaction>
</comment>
<comment type="pathway">
    <text evidence="1">Pyrimidine metabolism; UMP biosynthesis via de novo pathway; (S)-dihydroorotate from bicarbonate: step 2/3.</text>
</comment>
<comment type="subunit">
    <text evidence="1">Heterododecamer (2C3:3R2) of six catalytic PyrB chains organized as two trimers (C3), and six regulatory PyrI chains organized as three dimers (R2).</text>
</comment>
<comment type="similarity">
    <text evidence="1">Belongs to the aspartate/ornithine carbamoyltransferase superfamily. ATCase family.</text>
</comment>
<reference key="1">
    <citation type="journal article" date="2008" name="J. Bacteriol.">
        <title>Genome sequence of a nephritogenic and highly transformable M49 strain of Streptococcus pyogenes.</title>
        <authorList>
            <person name="McShan W.M."/>
            <person name="Ferretti J.J."/>
            <person name="Karasawa T."/>
            <person name="Suvorov A.N."/>
            <person name="Lin S."/>
            <person name="Qin B."/>
            <person name="Jia H."/>
            <person name="Kenton S."/>
            <person name="Najar F."/>
            <person name="Wu H."/>
            <person name="Scott J."/>
            <person name="Roe B.A."/>
            <person name="Savic D.J."/>
        </authorList>
    </citation>
    <scope>NUCLEOTIDE SEQUENCE [LARGE SCALE GENOMIC DNA]</scope>
    <source>
        <strain>NZ131</strain>
    </source>
</reference>
<gene>
    <name evidence="1" type="primary">pyrB</name>
    <name type="ordered locus">Spy49_0652</name>
</gene>
<feature type="chain" id="PRO_1000088810" description="Aspartate carbamoyltransferase catalytic subunit">
    <location>
        <begin position="1"/>
        <end position="311"/>
    </location>
</feature>
<feature type="binding site" evidence="1">
    <location>
        <position position="59"/>
    </location>
    <ligand>
        <name>carbamoyl phosphate</name>
        <dbReference type="ChEBI" id="CHEBI:58228"/>
    </ligand>
</feature>
<feature type="binding site" evidence="1">
    <location>
        <position position="60"/>
    </location>
    <ligand>
        <name>carbamoyl phosphate</name>
        <dbReference type="ChEBI" id="CHEBI:58228"/>
    </ligand>
</feature>
<feature type="binding site" evidence="1">
    <location>
        <position position="87"/>
    </location>
    <ligand>
        <name>L-aspartate</name>
        <dbReference type="ChEBI" id="CHEBI:29991"/>
    </ligand>
</feature>
<feature type="binding site" evidence="1">
    <location>
        <position position="109"/>
    </location>
    <ligand>
        <name>carbamoyl phosphate</name>
        <dbReference type="ChEBI" id="CHEBI:58228"/>
    </ligand>
</feature>
<feature type="binding site" evidence="1">
    <location>
        <position position="139"/>
    </location>
    <ligand>
        <name>carbamoyl phosphate</name>
        <dbReference type="ChEBI" id="CHEBI:58228"/>
    </ligand>
</feature>
<feature type="binding site" evidence="1">
    <location>
        <position position="142"/>
    </location>
    <ligand>
        <name>carbamoyl phosphate</name>
        <dbReference type="ChEBI" id="CHEBI:58228"/>
    </ligand>
</feature>
<feature type="binding site" evidence="1">
    <location>
        <position position="172"/>
    </location>
    <ligand>
        <name>L-aspartate</name>
        <dbReference type="ChEBI" id="CHEBI:29991"/>
    </ligand>
</feature>
<feature type="binding site" evidence="1">
    <location>
        <position position="224"/>
    </location>
    <ligand>
        <name>L-aspartate</name>
        <dbReference type="ChEBI" id="CHEBI:29991"/>
    </ligand>
</feature>
<feature type="binding site" evidence="1">
    <location>
        <position position="265"/>
    </location>
    <ligand>
        <name>carbamoyl phosphate</name>
        <dbReference type="ChEBI" id="CHEBI:58228"/>
    </ligand>
</feature>
<feature type="binding site" evidence="1">
    <location>
        <position position="266"/>
    </location>
    <ligand>
        <name>carbamoyl phosphate</name>
        <dbReference type="ChEBI" id="CHEBI:58228"/>
    </ligand>
</feature>